<dbReference type="EMBL" id="DS027060">
    <property type="protein sequence ID" value="EAW06923.1"/>
    <property type="molecule type" value="Genomic_DNA"/>
</dbReference>
<dbReference type="RefSeq" id="XP_001268349.1">
    <property type="nucleotide sequence ID" value="XM_001268348.1"/>
</dbReference>
<dbReference type="SMR" id="A1CUD6"/>
<dbReference type="STRING" id="344612.A1CUD6"/>
<dbReference type="EnsemblFungi" id="EAW06923">
    <property type="protein sequence ID" value="EAW06923"/>
    <property type="gene ID" value="ACLA_086220"/>
</dbReference>
<dbReference type="GeneID" id="4700403"/>
<dbReference type="KEGG" id="act:ACLA_086220"/>
<dbReference type="VEuPathDB" id="FungiDB:ACLA_086220"/>
<dbReference type="eggNOG" id="KOG0295">
    <property type="taxonomic scope" value="Eukaryota"/>
</dbReference>
<dbReference type="HOGENOM" id="CLU_000288_57_15_1"/>
<dbReference type="OMA" id="WHVATKE"/>
<dbReference type="OrthoDB" id="10264588at2759"/>
<dbReference type="Proteomes" id="UP000006701">
    <property type="component" value="Unassembled WGS sequence"/>
</dbReference>
<dbReference type="GO" id="GO:0005737">
    <property type="term" value="C:cytoplasm"/>
    <property type="evidence" value="ECO:0007669"/>
    <property type="project" value="UniProtKB-UniRule"/>
</dbReference>
<dbReference type="GO" id="GO:0005874">
    <property type="term" value="C:microtubule"/>
    <property type="evidence" value="ECO:0007669"/>
    <property type="project" value="UniProtKB-KW"/>
</dbReference>
<dbReference type="GO" id="GO:0005875">
    <property type="term" value="C:microtubule associated complex"/>
    <property type="evidence" value="ECO:0007669"/>
    <property type="project" value="UniProtKB-UniRule"/>
</dbReference>
<dbReference type="GO" id="GO:0000922">
    <property type="term" value="C:spindle pole"/>
    <property type="evidence" value="ECO:0007669"/>
    <property type="project" value="UniProtKB-SubCell"/>
</dbReference>
<dbReference type="GO" id="GO:0070840">
    <property type="term" value="F:dynein complex binding"/>
    <property type="evidence" value="ECO:0007669"/>
    <property type="project" value="UniProtKB-UniRule"/>
</dbReference>
<dbReference type="GO" id="GO:0051301">
    <property type="term" value="P:cell division"/>
    <property type="evidence" value="ECO:0007669"/>
    <property type="project" value="UniProtKB-KW"/>
</dbReference>
<dbReference type="GO" id="GO:0000132">
    <property type="term" value="P:establishment of mitotic spindle orientation"/>
    <property type="evidence" value="ECO:0007669"/>
    <property type="project" value="UniProtKB-UniRule"/>
</dbReference>
<dbReference type="GO" id="GO:0051012">
    <property type="term" value="P:microtubule sliding"/>
    <property type="evidence" value="ECO:0007669"/>
    <property type="project" value="UniProtKB-UniRule"/>
</dbReference>
<dbReference type="CDD" id="cd00200">
    <property type="entry name" value="WD40"/>
    <property type="match status" value="1"/>
</dbReference>
<dbReference type="FunFam" id="1.20.960.30:FF:000002">
    <property type="entry name" value="Platelet-activating factor acetylhydrolase ib"/>
    <property type="match status" value="1"/>
</dbReference>
<dbReference type="Gene3D" id="1.20.960.30">
    <property type="match status" value="1"/>
</dbReference>
<dbReference type="Gene3D" id="2.130.10.10">
    <property type="entry name" value="YVTN repeat-like/Quinoprotein amine dehydrogenase"/>
    <property type="match status" value="1"/>
</dbReference>
<dbReference type="HAMAP" id="MF_03141">
    <property type="entry name" value="lis1"/>
    <property type="match status" value="1"/>
</dbReference>
<dbReference type="InterPro" id="IPR017252">
    <property type="entry name" value="Dynein_regulator_LIS1"/>
</dbReference>
<dbReference type="InterPro" id="IPR020472">
    <property type="entry name" value="G-protein_beta_WD-40_rep"/>
</dbReference>
<dbReference type="InterPro" id="IPR037190">
    <property type="entry name" value="LIS1_N"/>
</dbReference>
<dbReference type="InterPro" id="IPR006594">
    <property type="entry name" value="LisH"/>
</dbReference>
<dbReference type="InterPro" id="IPR056795">
    <property type="entry name" value="PAC1-like_LisH-like_dom"/>
</dbReference>
<dbReference type="InterPro" id="IPR015943">
    <property type="entry name" value="WD40/YVTN_repeat-like_dom_sf"/>
</dbReference>
<dbReference type="InterPro" id="IPR019775">
    <property type="entry name" value="WD40_repeat_CS"/>
</dbReference>
<dbReference type="InterPro" id="IPR036322">
    <property type="entry name" value="WD40_repeat_dom_sf"/>
</dbReference>
<dbReference type="InterPro" id="IPR001680">
    <property type="entry name" value="WD40_rpt"/>
</dbReference>
<dbReference type="InterPro" id="IPR050349">
    <property type="entry name" value="WD_LIS1/nudF_dynein_reg"/>
</dbReference>
<dbReference type="PANTHER" id="PTHR44129">
    <property type="entry name" value="WD REPEAT-CONTAINING PROTEIN POP1"/>
    <property type="match status" value="1"/>
</dbReference>
<dbReference type="Pfam" id="PF24951">
    <property type="entry name" value="LisH_PAC1"/>
    <property type="match status" value="1"/>
</dbReference>
<dbReference type="Pfam" id="PF00400">
    <property type="entry name" value="WD40"/>
    <property type="match status" value="6"/>
</dbReference>
<dbReference type="PIRSF" id="PIRSF037647">
    <property type="entry name" value="Dynein_regulator_Lis1"/>
    <property type="match status" value="1"/>
</dbReference>
<dbReference type="PRINTS" id="PR00320">
    <property type="entry name" value="GPROTEINBRPT"/>
</dbReference>
<dbReference type="SMART" id="SM00320">
    <property type="entry name" value="WD40"/>
    <property type="match status" value="7"/>
</dbReference>
<dbReference type="SUPFAM" id="SSF109925">
    <property type="entry name" value="Lissencephaly-1 protein (Lis-1, PAF-AH alpha) N-terminal domain"/>
    <property type="match status" value="1"/>
</dbReference>
<dbReference type="SUPFAM" id="SSF50978">
    <property type="entry name" value="WD40 repeat-like"/>
    <property type="match status" value="1"/>
</dbReference>
<dbReference type="PROSITE" id="PS50896">
    <property type="entry name" value="LISH"/>
    <property type="match status" value="1"/>
</dbReference>
<dbReference type="PROSITE" id="PS00678">
    <property type="entry name" value="WD_REPEATS_1"/>
    <property type="match status" value="1"/>
</dbReference>
<dbReference type="PROSITE" id="PS50082">
    <property type="entry name" value="WD_REPEATS_2"/>
    <property type="match status" value="6"/>
</dbReference>
<dbReference type="PROSITE" id="PS50294">
    <property type="entry name" value="WD_REPEATS_REGION"/>
    <property type="match status" value="1"/>
</dbReference>
<keyword id="KW-0131">Cell cycle</keyword>
<keyword id="KW-0132">Cell division</keyword>
<keyword id="KW-0175">Coiled coil</keyword>
<keyword id="KW-0963">Cytoplasm</keyword>
<keyword id="KW-0206">Cytoskeleton</keyword>
<keyword id="KW-0493">Microtubule</keyword>
<keyword id="KW-0498">Mitosis</keyword>
<keyword id="KW-1185">Reference proteome</keyword>
<keyword id="KW-0677">Repeat</keyword>
<keyword id="KW-0813">Transport</keyword>
<keyword id="KW-0853">WD repeat</keyword>
<name>LIS11_ASPCL</name>
<sequence>MSQLLTTRQAEELHKSIIAYLASVNLSESATTLRAELGDAVTIDDATIKKYEGLLEKKWTSVVRLQKKIMDLESRCAALQSELDSATPTSLLRKNQDPTAWLPRAPPRHTLESHRSPVTCVAFHPVFSSLASGSDDTTIKIWDWELGELERTVKGHTKAVLDVDYGGPRGGTLLASCSSDLTIKLWDPSDDYKNIRTLPGHDHSVSSVRFIPSGAAGSPMSGNLLVSASRDKTLRIWDVTTGYCVKTLSGHVDWVRAVAPSIDGRFLFAAGDDRIPRLWDLSAAETRSTFLGHEHVIECVAIAPAASYPHLAVLSGLKKPPSASSSAEFFATGSRDKTIRLWDSRGNLIKTLVGHDNWVRALAFHPGGKYLLSVSDDKTIRCWDLTQECKCVRTIADTHEHFVTCLRWAPPLIKDSGANGDAGANGTPAATTTSNGARQDPNAANKISIRCVIATGSVDQKVRVFAT</sequence>
<organism>
    <name type="scientific">Aspergillus clavatus (strain ATCC 1007 / CBS 513.65 / DSM 816 / NCTC 3887 / NRRL 1 / QM 1276 / 107)</name>
    <dbReference type="NCBI Taxonomy" id="344612"/>
    <lineage>
        <taxon>Eukaryota</taxon>
        <taxon>Fungi</taxon>
        <taxon>Dikarya</taxon>
        <taxon>Ascomycota</taxon>
        <taxon>Pezizomycotina</taxon>
        <taxon>Eurotiomycetes</taxon>
        <taxon>Eurotiomycetidae</taxon>
        <taxon>Eurotiales</taxon>
        <taxon>Aspergillaceae</taxon>
        <taxon>Aspergillus</taxon>
        <taxon>Aspergillus subgen. Fumigati</taxon>
    </lineage>
</organism>
<gene>
    <name evidence="1" type="primary">nudF-1</name>
    <name evidence="1" type="synonym">lis1-1</name>
    <name type="ORF">ACLA_086220</name>
</gene>
<protein>
    <recommendedName>
        <fullName evidence="1">Nuclear distribution protein nudF 1</fullName>
    </recommendedName>
    <alternativeName>
        <fullName evidence="1">Lissencephaly-1 homolog 1</fullName>
        <shortName evidence="1">LIS-1 1</shortName>
    </alternativeName>
</protein>
<feature type="chain" id="PRO_0000405066" description="Nuclear distribution protein nudF 1">
    <location>
        <begin position="1"/>
        <end position="467"/>
    </location>
</feature>
<feature type="domain" description="LisH" evidence="1">
    <location>
        <begin position="9"/>
        <end position="41"/>
    </location>
</feature>
<feature type="repeat" description="WD 1">
    <location>
        <begin position="113"/>
        <end position="154"/>
    </location>
</feature>
<feature type="repeat" description="WD 2">
    <location>
        <begin position="156"/>
        <end position="196"/>
    </location>
</feature>
<feature type="repeat" description="WD 3">
    <location>
        <begin position="200"/>
        <end position="247"/>
    </location>
</feature>
<feature type="repeat" description="WD 4">
    <location>
        <begin position="250"/>
        <end position="289"/>
    </location>
</feature>
<feature type="repeat" description="WD 5">
    <location>
        <begin position="292"/>
        <end position="352"/>
    </location>
</feature>
<feature type="repeat" description="WD 6">
    <location>
        <begin position="354"/>
        <end position="393"/>
    </location>
</feature>
<feature type="repeat" description="WD 7">
    <location>
        <begin position="398"/>
        <end position="428"/>
    </location>
</feature>
<feature type="repeat" description="WD 8">
    <location>
        <begin position="429"/>
        <end position="466"/>
    </location>
</feature>
<feature type="region of interest" description="Disordered" evidence="2">
    <location>
        <begin position="417"/>
        <end position="441"/>
    </location>
</feature>
<feature type="coiled-coil region" evidence="1">
    <location>
        <begin position="60"/>
        <end position="87"/>
    </location>
</feature>
<feature type="compositionally biased region" description="Low complexity" evidence="2">
    <location>
        <begin position="417"/>
        <end position="437"/>
    </location>
</feature>
<reference key="1">
    <citation type="journal article" date="2008" name="PLoS Genet.">
        <title>Genomic islands in the pathogenic filamentous fungus Aspergillus fumigatus.</title>
        <authorList>
            <person name="Fedorova N.D."/>
            <person name="Khaldi N."/>
            <person name="Joardar V.S."/>
            <person name="Maiti R."/>
            <person name="Amedeo P."/>
            <person name="Anderson M.J."/>
            <person name="Crabtree J."/>
            <person name="Silva J.C."/>
            <person name="Badger J.H."/>
            <person name="Albarraq A."/>
            <person name="Angiuoli S."/>
            <person name="Bussey H."/>
            <person name="Bowyer P."/>
            <person name="Cotty P.J."/>
            <person name="Dyer P.S."/>
            <person name="Egan A."/>
            <person name="Galens K."/>
            <person name="Fraser-Liggett C.M."/>
            <person name="Haas B.J."/>
            <person name="Inman J.M."/>
            <person name="Kent R."/>
            <person name="Lemieux S."/>
            <person name="Malavazi I."/>
            <person name="Orvis J."/>
            <person name="Roemer T."/>
            <person name="Ronning C.M."/>
            <person name="Sundaram J.P."/>
            <person name="Sutton G."/>
            <person name="Turner G."/>
            <person name="Venter J.C."/>
            <person name="White O.R."/>
            <person name="Whitty B.R."/>
            <person name="Youngman P."/>
            <person name="Wolfe K.H."/>
            <person name="Goldman G.H."/>
            <person name="Wortman J.R."/>
            <person name="Jiang B."/>
            <person name="Denning D.W."/>
            <person name="Nierman W.C."/>
        </authorList>
    </citation>
    <scope>NUCLEOTIDE SEQUENCE [LARGE SCALE GENOMIC DNA]</scope>
    <source>
        <strain>ATCC 1007 / CBS 513.65 / DSM 816 / NCTC 3887 / NRRL 1 / QM 1276 / 107</strain>
    </source>
</reference>
<evidence type="ECO:0000255" key="1">
    <source>
        <dbReference type="HAMAP-Rule" id="MF_03141"/>
    </source>
</evidence>
<evidence type="ECO:0000256" key="2">
    <source>
        <dbReference type="SAM" id="MobiDB-lite"/>
    </source>
</evidence>
<comment type="function">
    <text evidence="1">Positively regulates the activity of the minus-end directed microtubule motor protein dynein. May enhance dynein-mediated microtubule sliding by targeting dynein to the microtubule plus end. Required for nuclear migration during vegetative growth as well as development. Required for retrograde early endosome (EE) transport from the hyphal tip. Required for localization of dynein to the mitotic spindle poles. Recruits additional proteins to the dynein complex at SPBs.</text>
</comment>
<comment type="subunit">
    <text evidence="1">Self-associates. Interacts with nudE and dynein.</text>
</comment>
<comment type="subcellular location">
    <subcellularLocation>
        <location evidence="1">Cytoplasm</location>
        <location evidence="1">Cytoskeleton</location>
    </subcellularLocation>
    <subcellularLocation>
        <location evidence="1">Cytoplasm</location>
        <location evidence="1">Cytoskeleton</location>
        <location evidence="1">Spindle pole</location>
    </subcellularLocation>
    <text evidence="1">Localizes to the plus ends of microtubules at the hyphal tip and the mitotic spindle poles.</text>
</comment>
<comment type="domain">
    <text evidence="1">Dimerization mediated by the LisH domain may be required to activate dynein.</text>
</comment>
<comment type="similarity">
    <text evidence="1">Belongs to the WD repeat LIS1/nudF family.</text>
</comment>
<accession>A1CUD6</accession>
<proteinExistence type="inferred from homology"/>